<accession>Q7UZH7</accession>
<comment type="function">
    <text evidence="1">Catalyzes the ATP-dependent amination of UTP to CTP with either L-glutamine or ammonia as the source of nitrogen. Regulates intracellular CTP levels through interactions with the four ribonucleotide triphosphates.</text>
</comment>
<comment type="catalytic activity">
    <reaction evidence="1">
        <text>UTP + L-glutamine + ATP + H2O = CTP + L-glutamate + ADP + phosphate + 2 H(+)</text>
        <dbReference type="Rhea" id="RHEA:26426"/>
        <dbReference type="ChEBI" id="CHEBI:15377"/>
        <dbReference type="ChEBI" id="CHEBI:15378"/>
        <dbReference type="ChEBI" id="CHEBI:29985"/>
        <dbReference type="ChEBI" id="CHEBI:30616"/>
        <dbReference type="ChEBI" id="CHEBI:37563"/>
        <dbReference type="ChEBI" id="CHEBI:43474"/>
        <dbReference type="ChEBI" id="CHEBI:46398"/>
        <dbReference type="ChEBI" id="CHEBI:58359"/>
        <dbReference type="ChEBI" id="CHEBI:456216"/>
        <dbReference type="EC" id="6.3.4.2"/>
    </reaction>
</comment>
<comment type="catalytic activity">
    <reaction evidence="1">
        <text>L-glutamine + H2O = L-glutamate + NH4(+)</text>
        <dbReference type="Rhea" id="RHEA:15889"/>
        <dbReference type="ChEBI" id="CHEBI:15377"/>
        <dbReference type="ChEBI" id="CHEBI:28938"/>
        <dbReference type="ChEBI" id="CHEBI:29985"/>
        <dbReference type="ChEBI" id="CHEBI:58359"/>
    </reaction>
</comment>
<comment type="catalytic activity">
    <reaction evidence="1">
        <text>UTP + NH4(+) + ATP = CTP + ADP + phosphate + 2 H(+)</text>
        <dbReference type="Rhea" id="RHEA:16597"/>
        <dbReference type="ChEBI" id="CHEBI:15378"/>
        <dbReference type="ChEBI" id="CHEBI:28938"/>
        <dbReference type="ChEBI" id="CHEBI:30616"/>
        <dbReference type="ChEBI" id="CHEBI:37563"/>
        <dbReference type="ChEBI" id="CHEBI:43474"/>
        <dbReference type="ChEBI" id="CHEBI:46398"/>
        <dbReference type="ChEBI" id="CHEBI:456216"/>
    </reaction>
</comment>
<comment type="activity regulation">
    <text evidence="1">Allosterically activated by GTP, when glutamine is the substrate; GTP has no effect on the reaction when ammonia is the substrate. The allosteric effector GTP functions by stabilizing the protein conformation that binds the tetrahedral intermediate(s) formed during glutamine hydrolysis. Inhibited by the product CTP, via allosteric rather than competitive inhibition.</text>
</comment>
<comment type="pathway">
    <text evidence="1">Pyrimidine metabolism; CTP biosynthesis via de novo pathway; CTP from UDP: step 2/2.</text>
</comment>
<comment type="subunit">
    <text evidence="1">Homotetramer.</text>
</comment>
<comment type="miscellaneous">
    <text evidence="1">CTPSs have evolved a hybrid strategy for distinguishing between UTP and CTP. The overlapping regions of the product feedback inhibitory and substrate sites recognize a common feature in both compounds, the triphosphate moiety. To differentiate isosteric substrate and product pyrimidine rings, an additional pocket far from the expected kinase/ligase catalytic site, specifically recognizes the cytosine and ribose portions of the product inhibitor.</text>
</comment>
<comment type="similarity">
    <text evidence="1">Belongs to the CTP synthase family.</text>
</comment>
<dbReference type="EC" id="6.3.4.2" evidence="1"/>
<dbReference type="EMBL" id="BX548174">
    <property type="protein sequence ID" value="CAE20148.1"/>
    <property type="molecule type" value="Genomic_DNA"/>
</dbReference>
<dbReference type="RefSeq" id="WP_011133316.1">
    <property type="nucleotide sequence ID" value="NC_005072.1"/>
</dbReference>
<dbReference type="SMR" id="Q7UZH7"/>
<dbReference type="STRING" id="59919.PMM1689"/>
<dbReference type="KEGG" id="pmm:PMM1689"/>
<dbReference type="eggNOG" id="COG0504">
    <property type="taxonomic scope" value="Bacteria"/>
</dbReference>
<dbReference type="HOGENOM" id="CLU_011675_5_0_3"/>
<dbReference type="OrthoDB" id="9801107at2"/>
<dbReference type="UniPathway" id="UPA00159">
    <property type="reaction ID" value="UER00277"/>
</dbReference>
<dbReference type="Proteomes" id="UP000001026">
    <property type="component" value="Chromosome"/>
</dbReference>
<dbReference type="GO" id="GO:0005829">
    <property type="term" value="C:cytosol"/>
    <property type="evidence" value="ECO:0007669"/>
    <property type="project" value="TreeGrafter"/>
</dbReference>
<dbReference type="GO" id="GO:0005524">
    <property type="term" value="F:ATP binding"/>
    <property type="evidence" value="ECO:0007669"/>
    <property type="project" value="UniProtKB-KW"/>
</dbReference>
<dbReference type="GO" id="GO:0003883">
    <property type="term" value="F:CTP synthase activity"/>
    <property type="evidence" value="ECO:0007669"/>
    <property type="project" value="UniProtKB-UniRule"/>
</dbReference>
<dbReference type="GO" id="GO:0004359">
    <property type="term" value="F:glutaminase activity"/>
    <property type="evidence" value="ECO:0007669"/>
    <property type="project" value="RHEA"/>
</dbReference>
<dbReference type="GO" id="GO:0042802">
    <property type="term" value="F:identical protein binding"/>
    <property type="evidence" value="ECO:0007669"/>
    <property type="project" value="TreeGrafter"/>
</dbReference>
<dbReference type="GO" id="GO:0046872">
    <property type="term" value="F:metal ion binding"/>
    <property type="evidence" value="ECO:0007669"/>
    <property type="project" value="UniProtKB-KW"/>
</dbReference>
<dbReference type="GO" id="GO:0044210">
    <property type="term" value="P:'de novo' CTP biosynthetic process"/>
    <property type="evidence" value="ECO:0007669"/>
    <property type="project" value="UniProtKB-UniRule"/>
</dbReference>
<dbReference type="GO" id="GO:0019856">
    <property type="term" value="P:pyrimidine nucleobase biosynthetic process"/>
    <property type="evidence" value="ECO:0007669"/>
    <property type="project" value="TreeGrafter"/>
</dbReference>
<dbReference type="CDD" id="cd03113">
    <property type="entry name" value="CTPS_N"/>
    <property type="match status" value="1"/>
</dbReference>
<dbReference type="CDD" id="cd01746">
    <property type="entry name" value="GATase1_CTP_Synthase"/>
    <property type="match status" value="1"/>
</dbReference>
<dbReference type="FunFam" id="3.40.50.300:FF:000009">
    <property type="entry name" value="CTP synthase"/>
    <property type="match status" value="1"/>
</dbReference>
<dbReference type="FunFam" id="3.40.50.880:FF:000002">
    <property type="entry name" value="CTP synthase"/>
    <property type="match status" value="1"/>
</dbReference>
<dbReference type="Gene3D" id="3.40.50.880">
    <property type="match status" value="1"/>
</dbReference>
<dbReference type="Gene3D" id="3.40.50.300">
    <property type="entry name" value="P-loop containing nucleotide triphosphate hydrolases"/>
    <property type="match status" value="1"/>
</dbReference>
<dbReference type="HAMAP" id="MF_01227">
    <property type="entry name" value="PyrG"/>
    <property type="match status" value="1"/>
</dbReference>
<dbReference type="InterPro" id="IPR029062">
    <property type="entry name" value="Class_I_gatase-like"/>
</dbReference>
<dbReference type="InterPro" id="IPR004468">
    <property type="entry name" value="CTP_synthase"/>
</dbReference>
<dbReference type="InterPro" id="IPR017456">
    <property type="entry name" value="CTP_synthase_N"/>
</dbReference>
<dbReference type="InterPro" id="IPR017926">
    <property type="entry name" value="GATASE"/>
</dbReference>
<dbReference type="InterPro" id="IPR033828">
    <property type="entry name" value="GATase1_CTP_Synthase"/>
</dbReference>
<dbReference type="InterPro" id="IPR027417">
    <property type="entry name" value="P-loop_NTPase"/>
</dbReference>
<dbReference type="NCBIfam" id="NF003792">
    <property type="entry name" value="PRK05380.1"/>
    <property type="match status" value="1"/>
</dbReference>
<dbReference type="NCBIfam" id="TIGR00337">
    <property type="entry name" value="PyrG"/>
    <property type="match status" value="1"/>
</dbReference>
<dbReference type="PANTHER" id="PTHR11550">
    <property type="entry name" value="CTP SYNTHASE"/>
    <property type="match status" value="1"/>
</dbReference>
<dbReference type="PANTHER" id="PTHR11550:SF0">
    <property type="entry name" value="CTP SYNTHASE-RELATED"/>
    <property type="match status" value="1"/>
</dbReference>
<dbReference type="Pfam" id="PF06418">
    <property type="entry name" value="CTP_synth_N"/>
    <property type="match status" value="1"/>
</dbReference>
<dbReference type="Pfam" id="PF00117">
    <property type="entry name" value="GATase"/>
    <property type="match status" value="1"/>
</dbReference>
<dbReference type="SUPFAM" id="SSF52317">
    <property type="entry name" value="Class I glutamine amidotransferase-like"/>
    <property type="match status" value="1"/>
</dbReference>
<dbReference type="SUPFAM" id="SSF52540">
    <property type="entry name" value="P-loop containing nucleoside triphosphate hydrolases"/>
    <property type="match status" value="1"/>
</dbReference>
<dbReference type="PROSITE" id="PS51273">
    <property type="entry name" value="GATASE_TYPE_1"/>
    <property type="match status" value="1"/>
</dbReference>
<organism>
    <name type="scientific">Prochlorococcus marinus subsp. pastoris (strain CCMP1986 / NIES-2087 / MED4)</name>
    <dbReference type="NCBI Taxonomy" id="59919"/>
    <lineage>
        <taxon>Bacteria</taxon>
        <taxon>Bacillati</taxon>
        <taxon>Cyanobacteriota</taxon>
        <taxon>Cyanophyceae</taxon>
        <taxon>Synechococcales</taxon>
        <taxon>Prochlorococcaceae</taxon>
        <taxon>Prochlorococcus</taxon>
    </lineage>
</organism>
<proteinExistence type="inferred from homology"/>
<protein>
    <recommendedName>
        <fullName evidence="1">CTP synthase</fullName>
        <ecNumber evidence="1">6.3.4.2</ecNumber>
    </recommendedName>
    <alternativeName>
        <fullName evidence="1">Cytidine 5'-triphosphate synthase</fullName>
    </alternativeName>
    <alternativeName>
        <fullName evidence="1">Cytidine triphosphate synthetase</fullName>
        <shortName evidence="1">CTP synthetase</shortName>
        <shortName evidence="1">CTPS</shortName>
    </alternativeName>
    <alternativeName>
        <fullName evidence="1">UTP--ammonia ligase</fullName>
    </alternativeName>
</protein>
<keyword id="KW-0067">ATP-binding</keyword>
<keyword id="KW-0315">Glutamine amidotransferase</keyword>
<keyword id="KW-0436">Ligase</keyword>
<keyword id="KW-0460">Magnesium</keyword>
<keyword id="KW-0479">Metal-binding</keyword>
<keyword id="KW-0547">Nucleotide-binding</keyword>
<keyword id="KW-0665">Pyrimidine biosynthesis</keyword>
<feature type="chain" id="PRO_0000266180" description="CTP synthase">
    <location>
        <begin position="1"/>
        <end position="536"/>
    </location>
</feature>
<feature type="domain" description="Glutamine amidotransferase type-1" evidence="1">
    <location>
        <begin position="292"/>
        <end position="534"/>
    </location>
</feature>
<feature type="region of interest" description="Amidoligase domain" evidence="1">
    <location>
        <begin position="1"/>
        <end position="267"/>
    </location>
</feature>
<feature type="active site" description="Nucleophile; for glutamine hydrolysis" evidence="1">
    <location>
        <position position="381"/>
    </location>
</feature>
<feature type="active site" evidence="1">
    <location>
        <position position="507"/>
    </location>
</feature>
<feature type="active site" evidence="1">
    <location>
        <position position="509"/>
    </location>
</feature>
<feature type="binding site" evidence="1">
    <location>
        <position position="13"/>
    </location>
    <ligand>
        <name>CTP</name>
        <dbReference type="ChEBI" id="CHEBI:37563"/>
        <note>allosteric inhibitor</note>
    </ligand>
</feature>
<feature type="binding site" evidence="1">
    <location>
        <position position="13"/>
    </location>
    <ligand>
        <name>UTP</name>
        <dbReference type="ChEBI" id="CHEBI:46398"/>
    </ligand>
</feature>
<feature type="binding site" evidence="1">
    <location>
        <begin position="14"/>
        <end position="19"/>
    </location>
    <ligand>
        <name>ATP</name>
        <dbReference type="ChEBI" id="CHEBI:30616"/>
    </ligand>
</feature>
<feature type="binding site" evidence="1">
    <location>
        <position position="71"/>
    </location>
    <ligand>
        <name>ATP</name>
        <dbReference type="ChEBI" id="CHEBI:30616"/>
    </ligand>
</feature>
<feature type="binding site" evidence="1">
    <location>
        <position position="71"/>
    </location>
    <ligand>
        <name>Mg(2+)</name>
        <dbReference type="ChEBI" id="CHEBI:18420"/>
    </ligand>
</feature>
<feature type="binding site" evidence="1">
    <location>
        <position position="141"/>
    </location>
    <ligand>
        <name>Mg(2+)</name>
        <dbReference type="ChEBI" id="CHEBI:18420"/>
    </ligand>
</feature>
<feature type="binding site" evidence="1">
    <location>
        <begin position="148"/>
        <end position="150"/>
    </location>
    <ligand>
        <name>CTP</name>
        <dbReference type="ChEBI" id="CHEBI:37563"/>
        <note>allosteric inhibitor</note>
    </ligand>
</feature>
<feature type="binding site" evidence="1">
    <location>
        <begin position="188"/>
        <end position="193"/>
    </location>
    <ligand>
        <name>CTP</name>
        <dbReference type="ChEBI" id="CHEBI:37563"/>
        <note>allosteric inhibitor</note>
    </ligand>
</feature>
<feature type="binding site" evidence="1">
    <location>
        <begin position="188"/>
        <end position="193"/>
    </location>
    <ligand>
        <name>UTP</name>
        <dbReference type="ChEBI" id="CHEBI:46398"/>
    </ligand>
</feature>
<feature type="binding site" evidence="1">
    <location>
        <position position="224"/>
    </location>
    <ligand>
        <name>CTP</name>
        <dbReference type="ChEBI" id="CHEBI:37563"/>
        <note>allosteric inhibitor</note>
    </ligand>
</feature>
<feature type="binding site" evidence="1">
    <location>
        <position position="224"/>
    </location>
    <ligand>
        <name>UTP</name>
        <dbReference type="ChEBI" id="CHEBI:46398"/>
    </ligand>
</feature>
<feature type="binding site" evidence="1">
    <location>
        <position position="354"/>
    </location>
    <ligand>
        <name>L-glutamine</name>
        <dbReference type="ChEBI" id="CHEBI:58359"/>
    </ligand>
</feature>
<feature type="binding site" evidence="1">
    <location>
        <begin position="382"/>
        <end position="385"/>
    </location>
    <ligand>
        <name>L-glutamine</name>
        <dbReference type="ChEBI" id="CHEBI:58359"/>
    </ligand>
</feature>
<feature type="binding site" evidence="1">
    <location>
        <position position="405"/>
    </location>
    <ligand>
        <name>L-glutamine</name>
        <dbReference type="ChEBI" id="CHEBI:58359"/>
    </ligand>
</feature>
<feature type="binding site" evidence="1">
    <location>
        <position position="462"/>
    </location>
    <ligand>
        <name>L-glutamine</name>
        <dbReference type="ChEBI" id="CHEBI:58359"/>
    </ligand>
</feature>
<name>PYRG_PROMP</name>
<sequence>MSKFVFVTGGVVSSIGKGIVAASLGRLLKSRGYSVSILKLDPYLNVDPGTMSPFQHGEVFVTEDGAETDLDLGHYERFTDTAMTRLNSVTTGSIYQAVINKERRGSYNGGTVQVIPHITREIRERIHRVAANSNADIVITEIGGTVGDIESLPFLEAIREFKNDVNKNDVAYIHVTLLPYIKTSGEIKTKPTQHSVKELRSIGIQPDLLVCRSDKEINEGLKRKLSGFCGVNLNCVIEALDADSIYSVPLSLKNEGLCKQTLNCLELEDKECDLENWEKIIHNLRNPGNPIKVALVGKYIELGDAYLSVVEALRHACIEQKALLDLYWISAEMIEEKSAEEYLNDVDAIVVPGGFGNRGVNGKIEAIKFAREKNIPFLGLCLGMQCAVIEWARNIAQLPDASSSELNPDSENPVIHLLPEQEDIVDLGGTMRLGVYPCRLQKNTTGKELYNEDVIYERHRHRYEFNNYYKQSFLDSGYKISGTSPDGRLVELIELVDHPYFLACQYHPEFLSRPGKPHPLFKGLIKASQEKLEQSN</sequence>
<gene>
    <name evidence="1" type="primary">pyrG</name>
    <name type="ordered locus">PMM1689</name>
</gene>
<evidence type="ECO:0000255" key="1">
    <source>
        <dbReference type="HAMAP-Rule" id="MF_01227"/>
    </source>
</evidence>
<reference key="1">
    <citation type="journal article" date="2003" name="Nature">
        <title>Genome divergence in two Prochlorococcus ecotypes reflects oceanic niche differentiation.</title>
        <authorList>
            <person name="Rocap G."/>
            <person name="Larimer F.W."/>
            <person name="Lamerdin J.E."/>
            <person name="Malfatti S."/>
            <person name="Chain P."/>
            <person name="Ahlgren N.A."/>
            <person name="Arellano A."/>
            <person name="Coleman M."/>
            <person name="Hauser L."/>
            <person name="Hess W.R."/>
            <person name="Johnson Z.I."/>
            <person name="Land M.L."/>
            <person name="Lindell D."/>
            <person name="Post A.F."/>
            <person name="Regala W."/>
            <person name="Shah M."/>
            <person name="Shaw S.L."/>
            <person name="Steglich C."/>
            <person name="Sullivan M.B."/>
            <person name="Ting C.S."/>
            <person name="Tolonen A."/>
            <person name="Webb E.A."/>
            <person name="Zinser E.R."/>
            <person name="Chisholm S.W."/>
        </authorList>
    </citation>
    <scope>NUCLEOTIDE SEQUENCE [LARGE SCALE GENOMIC DNA]</scope>
    <source>
        <strain>CCMP1986 / NIES-2087 / MED4</strain>
    </source>
</reference>